<keyword id="KW-1015">Disulfide bond</keyword>
<keyword id="KW-0325">Glycoprotein</keyword>
<keyword id="KW-0328">Glycosyltransferase</keyword>
<keyword id="KW-0333">Golgi apparatus</keyword>
<keyword id="KW-0460">Magnesium</keyword>
<keyword id="KW-0464">Manganese</keyword>
<keyword id="KW-0472">Membrane</keyword>
<keyword id="KW-0479">Metal-binding</keyword>
<keyword id="KW-1185">Reference proteome</keyword>
<keyword id="KW-0728">SH3 domain</keyword>
<keyword id="KW-0735">Signal-anchor</keyword>
<keyword id="KW-0808">Transferase</keyword>
<keyword id="KW-0812">Transmembrane</keyword>
<keyword id="KW-1133">Transmembrane helix</keyword>
<name>FUT8_CAEEL</name>
<sequence>MLKCIAAVGTVVWMTMFLFLYSQLSNNQSGGDSIRAWRQTKEAIDKLQEQNEDLKSILEKERQERNDQHKKIMEQSHQLPPNPENPSLPKPEPVKEIISKPSILGPVQQEVQKRMLDDRIREMFYLLHSQTIENSTKILLETQMISLMGLSAQLEKLEGSEEERFKQRTAITQRIFKSIEKLQNPKACSEAKTLVCNLDKECGFGCQLHHVTYCAITAFATQRMMVLKRDGSSWKYSSHGWTSVFKKLSKCSFDEAVGNTEAKPFAEPSPARVVSLGIVDSLITKPTFLPQAVPEQLLESLTSLHSHPPAFFVGTFISYLMRFNSATQEKLDKALKSIPLDKGPIVGLQIRRTDKVGTEAAFHALKEYMEWTEIWFKVEEKRQGKPLERRIFIASDDPTVVPEAKNDYPNYEVYGSTEIAKTAQLNNRYTDASLMGVITDIYILSKVNYLVCTFSSQVCRMGYELRQPSGADDGSKFHSLDDIYYFGGQQAHEVIVIEDHIAQNNKEIDLKVGDKVGIAGNHWNGYSKGTNRQTYKEGVFPSYKVVNDWRKFKFEALLD</sequence>
<dbReference type="EC" id="2.4.1.68" evidence="3 8"/>
<dbReference type="EMBL" id="AJ512486">
    <property type="protein sequence ID" value="CAD54736.1"/>
    <property type="molecule type" value="mRNA"/>
</dbReference>
<dbReference type="EMBL" id="BX284605">
    <property type="protein sequence ID" value="CCD64126.1"/>
    <property type="molecule type" value="Genomic_DNA"/>
</dbReference>
<dbReference type="RefSeq" id="NP_504555.2">
    <property type="nucleotide sequence ID" value="NM_072154.5"/>
</dbReference>
<dbReference type="SMR" id="G5EFE7"/>
<dbReference type="FunCoup" id="G5EFE7">
    <property type="interactions" value="1021"/>
</dbReference>
<dbReference type="IntAct" id="G5EFE7">
    <property type="interactions" value="3"/>
</dbReference>
<dbReference type="STRING" id="6239.C10F3.6.2"/>
<dbReference type="GlyCosmos" id="G5EFE7">
    <property type="glycosylation" value="2 sites, No reported glycans"/>
</dbReference>
<dbReference type="PaxDb" id="6239-C10F3.6"/>
<dbReference type="PeptideAtlas" id="G5EFE7"/>
<dbReference type="EnsemblMetazoa" id="C10F3.6.1">
    <property type="protein sequence ID" value="C10F3.6.1"/>
    <property type="gene ID" value="WBGene00001508"/>
</dbReference>
<dbReference type="EnsemblMetazoa" id="C10F3.6.2">
    <property type="protein sequence ID" value="C10F3.6.2"/>
    <property type="gene ID" value="WBGene00001508"/>
</dbReference>
<dbReference type="GeneID" id="178985"/>
<dbReference type="KEGG" id="cel:CELE_C10F3.6"/>
<dbReference type="AGR" id="WB:WBGene00001508"/>
<dbReference type="CTD" id="178985"/>
<dbReference type="WormBase" id="C10F3.6">
    <property type="protein sequence ID" value="CE32580"/>
    <property type="gene ID" value="WBGene00001508"/>
    <property type="gene designation" value="fut-8"/>
</dbReference>
<dbReference type="eggNOG" id="KOG3705">
    <property type="taxonomic scope" value="Eukaryota"/>
</dbReference>
<dbReference type="GeneTree" id="ENSGT00530000063737"/>
<dbReference type="HOGENOM" id="CLU_021940_1_0_1"/>
<dbReference type="InParanoid" id="G5EFE7"/>
<dbReference type="OMA" id="KVVNDWR"/>
<dbReference type="OrthoDB" id="2014825at2759"/>
<dbReference type="PhylomeDB" id="G5EFE7"/>
<dbReference type="Reactome" id="R-CEL-975578">
    <property type="pathway name" value="Reactions specific to the complex N-glycan synthesis pathway"/>
</dbReference>
<dbReference type="UniPathway" id="UPA00378"/>
<dbReference type="PRO" id="PR:G5EFE7"/>
<dbReference type="Proteomes" id="UP000001940">
    <property type="component" value="Chromosome V"/>
</dbReference>
<dbReference type="Bgee" id="WBGene00001508">
    <property type="expression patterns" value="Expressed in larva and 3 other cell types or tissues"/>
</dbReference>
<dbReference type="GO" id="GO:0032580">
    <property type="term" value="C:Golgi cisterna membrane"/>
    <property type="evidence" value="ECO:0007669"/>
    <property type="project" value="UniProtKB-SubCell"/>
</dbReference>
<dbReference type="GO" id="GO:0046921">
    <property type="term" value="F:alpha-(1-&gt;6)-fucosyltransferase activity"/>
    <property type="evidence" value="ECO:0000314"/>
    <property type="project" value="WormBase"/>
</dbReference>
<dbReference type="GO" id="GO:0008417">
    <property type="term" value="F:fucosyltransferase activity"/>
    <property type="evidence" value="ECO:0000316"/>
    <property type="project" value="UniProtKB"/>
</dbReference>
<dbReference type="GO" id="GO:0046702">
    <property type="term" value="F:galactoside 6-L-fucosyltransferase activity"/>
    <property type="evidence" value="ECO:0000314"/>
    <property type="project" value="UniProtKB"/>
</dbReference>
<dbReference type="GO" id="GO:0008424">
    <property type="term" value="F:glycoprotein 6-alpha-L-fucosyltransferase activity"/>
    <property type="evidence" value="ECO:0000314"/>
    <property type="project" value="UniProtKB"/>
</dbReference>
<dbReference type="GO" id="GO:0046872">
    <property type="term" value="F:metal ion binding"/>
    <property type="evidence" value="ECO:0007669"/>
    <property type="project" value="UniProtKB-KW"/>
</dbReference>
<dbReference type="GO" id="GO:0036065">
    <property type="term" value="P:fucosylation"/>
    <property type="evidence" value="ECO:0000314"/>
    <property type="project" value="UniProtKB"/>
</dbReference>
<dbReference type="GO" id="GO:0036071">
    <property type="term" value="P:N-glycan fucosylation"/>
    <property type="evidence" value="ECO:0000318"/>
    <property type="project" value="GO_Central"/>
</dbReference>
<dbReference type="GO" id="GO:0006487">
    <property type="term" value="P:protein N-linked glycosylation"/>
    <property type="evidence" value="ECO:0000314"/>
    <property type="project" value="WormBase"/>
</dbReference>
<dbReference type="CDD" id="cd11300">
    <property type="entry name" value="Fut8_like"/>
    <property type="match status" value="1"/>
</dbReference>
<dbReference type="CDD" id="cd11792">
    <property type="entry name" value="SH3_Fut8"/>
    <property type="match status" value="1"/>
</dbReference>
<dbReference type="FunFam" id="2.30.30.40:FF:000070">
    <property type="entry name" value="Alpha-(1,6)-fucosyltransferase"/>
    <property type="match status" value="1"/>
</dbReference>
<dbReference type="FunFam" id="3.40.50.11350:FF:000001">
    <property type="entry name" value="Alpha-(1,6)-fucosyltransferase"/>
    <property type="match status" value="1"/>
</dbReference>
<dbReference type="Gene3D" id="3.40.50.11350">
    <property type="match status" value="1"/>
</dbReference>
<dbReference type="Gene3D" id="2.30.30.40">
    <property type="entry name" value="SH3 Domains"/>
    <property type="match status" value="1"/>
</dbReference>
<dbReference type="InterPro" id="IPR015827">
    <property type="entry name" value="Fut8"/>
</dbReference>
<dbReference type="InterPro" id="IPR045573">
    <property type="entry name" value="Fut8_N_cat"/>
</dbReference>
<dbReference type="InterPro" id="IPR035653">
    <property type="entry name" value="Fut8_SH3"/>
</dbReference>
<dbReference type="InterPro" id="IPR027350">
    <property type="entry name" value="GT23_dom"/>
</dbReference>
<dbReference type="InterPro" id="IPR036028">
    <property type="entry name" value="SH3-like_dom_sf"/>
</dbReference>
<dbReference type="InterPro" id="IPR001452">
    <property type="entry name" value="SH3_domain"/>
</dbReference>
<dbReference type="PANTHER" id="PTHR13132">
    <property type="entry name" value="ALPHA- 1,6 -FUCOSYLTRANSFERASE"/>
    <property type="match status" value="1"/>
</dbReference>
<dbReference type="PANTHER" id="PTHR13132:SF29">
    <property type="entry name" value="ALPHA-(1,6)-FUCOSYLTRANSFERASE"/>
    <property type="match status" value="1"/>
</dbReference>
<dbReference type="Pfam" id="PF19745">
    <property type="entry name" value="FUT8_N_cat"/>
    <property type="match status" value="1"/>
</dbReference>
<dbReference type="PIRSF" id="PIRSF000472">
    <property type="entry name" value="Alpha1_6FUT_euk"/>
    <property type="match status" value="1"/>
</dbReference>
<dbReference type="SMART" id="SM00326">
    <property type="entry name" value="SH3"/>
    <property type="match status" value="1"/>
</dbReference>
<dbReference type="SUPFAM" id="SSF50044">
    <property type="entry name" value="SH3-domain"/>
    <property type="match status" value="1"/>
</dbReference>
<dbReference type="PROSITE" id="PS51659">
    <property type="entry name" value="GT23"/>
    <property type="match status" value="1"/>
</dbReference>
<dbReference type="PROSITE" id="PS50002">
    <property type="entry name" value="SH3"/>
    <property type="match status" value="1"/>
</dbReference>
<organism evidence="12">
    <name type="scientific">Caenorhabditis elegans</name>
    <dbReference type="NCBI Taxonomy" id="6239"/>
    <lineage>
        <taxon>Eukaryota</taxon>
        <taxon>Metazoa</taxon>
        <taxon>Ecdysozoa</taxon>
        <taxon>Nematoda</taxon>
        <taxon>Chromadorea</taxon>
        <taxon>Rhabditida</taxon>
        <taxon>Rhabditina</taxon>
        <taxon>Rhabditomorpha</taxon>
        <taxon>Rhabditoidea</taxon>
        <taxon>Rhabditidae</taxon>
        <taxon>Peloderinae</taxon>
        <taxon>Caenorhabditis</taxon>
    </lineage>
</organism>
<evidence type="ECO:0000250" key="1">
    <source>
        <dbReference type="UniProtKB" id="Q9BYC5"/>
    </source>
</evidence>
<evidence type="ECO:0000255" key="2"/>
<evidence type="ECO:0000255" key="3">
    <source>
        <dbReference type="PIRNR" id="PIRNR000472"/>
    </source>
</evidence>
<evidence type="ECO:0000255" key="4">
    <source>
        <dbReference type="PROSITE-ProRule" id="PRU00192"/>
    </source>
</evidence>
<evidence type="ECO:0000255" key="5">
    <source>
        <dbReference type="PROSITE-ProRule" id="PRU00498"/>
    </source>
</evidence>
<evidence type="ECO:0000255" key="6">
    <source>
        <dbReference type="PROSITE-ProRule" id="PRU00992"/>
    </source>
</evidence>
<evidence type="ECO:0000256" key="7">
    <source>
        <dbReference type="SAM" id="MobiDB-lite"/>
    </source>
</evidence>
<evidence type="ECO:0000269" key="8">
    <source>
    </source>
</evidence>
<evidence type="ECO:0000269" key="9">
    <source>
    </source>
</evidence>
<evidence type="ECO:0000305" key="10"/>
<evidence type="ECO:0000312" key="11">
    <source>
        <dbReference type="EMBL" id="CAD54736.1"/>
    </source>
</evidence>
<evidence type="ECO:0000312" key="12">
    <source>
        <dbReference type="Proteomes" id="UP000001940"/>
    </source>
</evidence>
<evidence type="ECO:0000312" key="13">
    <source>
        <dbReference type="WormBase" id="C10F3.6"/>
    </source>
</evidence>
<comment type="function">
    <text evidence="3 8 9">Catalyzes the addition of fucose in alpha 1-6 linkage to the first GlcNAc residue, next to the peptide chains in N-glycans (PubMed:15604090). The addition is prevented if the GlcNAc residue is already fucosylated (PubMed:15604090). Involved in susceptibility to the nematotoxic C.cinerea galectin Cgl2, likely by contributing to the synthesis of core alpha-1,6-fucosylated N-glycans to which Cgl2 binds (PubMed:20062796).</text>
</comment>
<comment type="catalytic activity">
    <reaction evidence="3 8">
        <text>N(4)-{beta-D-GlcNAc-(1-&gt;2)-alpha-D-Man-(1-&gt;3)-[beta-D-GlcNAc-(1-&gt;2)-alpha-D-Man-(1-&gt;6)]-beta-D-Man-(1-&gt;4)-beta-D-GlcNAc-(1-&gt;4)-beta-D-GlcNAc}-L-asparaginyl-[protein] + GDP-beta-L-fucose = an N(4)-{beta-D-GlcNAc-(1-&gt;2)-alpha-D-Man-(1-&gt;3)-[beta-D-GlcNAc-(1-&gt;2)-alpha-D-Man-(1-&gt;6)]-beta-D-Man-(1-&gt;4)-beta-D-GlcNAc-(1-&gt;4)-[alpha-L-Fuc-(1-&gt;6)]-beta-D-GlcNAc}-L-asparaginyl-[protein] + GDP + H(+)</text>
        <dbReference type="Rhea" id="RHEA:12985"/>
        <dbReference type="Rhea" id="RHEA-COMP:13526"/>
        <dbReference type="Rhea" id="RHEA-COMP:13532"/>
        <dbReference type="ChEBI" id="CHEBI:15378"/>
        <dbReference type="ChEBI" id="CHEBI:57273"/>
        <dbReference type="ChEBI" id="CHEBI:58189"/>
        <dbReference type="ChEBI" id="CHEBI:60651"/>
        <dbReference type="ChEBI" id="CHEBI:137207"/>
        <dbReference type="EC" id="2.4.1.68"/>
    </reaction>
</comment>
<comment type="cofactor">
    <cofactor evidence="8">
        <name>Mn(2+)</name>
        <dbReference type="ChEBI" id="CHEBI:29035"/>
    </cofactor>
    <cofactor evidence="8">
        <name>Mg(2+)</name>
        <dbReference type="ChEBI" id="CHEBI:18420"/>
    </cofactor>
    <text evidence="8">May also use Ca(2+). The enzyme has substantial activity without divalent cations.</text>
</comment>
<comment type="activity regulation">
    <text evidence="8">Inhibited by Fe(3+), Ni(2+) and Cu(2+).</text>
</comment>
<comment type="biophysicochemical properties">
    <phDependence>
        <text evidence="8">Optimum pH is 6-7.5.</text>
    </phDependence>
</comment>
<comment type="pathway">
    <text evidence="3">Protein modification; protein glycosylation.</text>
</comment>
<comment type="subcellular location">
    <subcellularLocation>
        <location evidence="3">Golgi apparatus</location>
        <location evidence="3">Golgi stack membrane</location>
        <topology evidence="10">Single-pass type II membrane protein</topology>
    </subcellularLocation>
    <text evidence="10">Membrane-bound form in trans cisternae of Golgi.</text>
</comment>
<comment type="similarity">
    <text evidence="3">Belongs to the glycosyltransferase 23 family.</text>
</comment>
<protein>
    <recommendedName>
        <fullName evidence="3">Alpha-(1,6)-fucosyltransferase</fullName>
        <shortName evidence="1">Alpha1-6FucT</shortName>
        <ecNumber evidence="3 8">2.4.1.68</ecNumber>
    </recommendedName>
    <alternativeName>
        <fullName evidence="13">Fucosyltransferase 8</fullName>
    </alternativeName>
    <alternativeName>
        <fullName evidence="1">GDP-L-Fuc:N-acetyl-beta-D-glucosaminide alpha1,6-fucosyltransferase</fullName>
    </alternativeName>
    <alternativeName>
        <fullName evidence="1">GDP-fucose--glycoprotein fucosyltransferase</fullName>
    </alternativeName>
    <alternativeName>
        <fullName evidence="1">Glycoprotein 6-alpha-L-fucosyltransferase</fullName>
    </alternativeName>
</protein>
<accession>G5EFE7</accession>
<reference evidence="11" key="1">
    <citation type="submission" date="2002-10" db="EMBL/GenBank/DDBJ databases">
        <title>Cloning, expression and genomic organization of two core fucosyltransferases (CeE and CeD) from Caenorhabditis elegans.</title>
        <authorList>
            <person name="Balanzino L."/>
            <person name="Oriol R."/>
            <person name="Michalski J.C."/>
            <person name="Candelier J.J."/>
            <person name="Martinez-Duncker I."/>
            <person name="Mollicone R."/>
        </authorList>
    </citation>
    <scope>NUCLEOTIDE SEQUENCE [MRNA]</scope>
</reference>
<reference evidence="12" key="2">
    <citation type="journal article" date="1998" name="Science">
        <title>Genome sequence of the nematode C. elegans: a platform for investigating biology.</title>
        <authorList>
            <consortium name="The C. elegans sequencing consortium"/>
        </authorList>
    </citation>
    <scope>NUCLEOTIDE SEQUENCE [LARGE SCALE GENOMIC DNA]</scope>
    <source>
        <strain evidence="12">Bristol N2</strain>
    </source>
</reference>
<reference evidence="10" key="3">
    <citation type="journal article" date="2005" name="Glycobiology">
        <title>Fucosyltransferase substrate specificity and the order of fucosylation in invertebrates.</title>
        <authorList>
            <person name="Paschinger K."/>
            <person name="Staudacher E."/>
            <person name="Stemmer U."/>
            <person name="Fabini G."/>
            <person name="Wilson I.B."/>
        </authorList>
    </citation>
    <scope>FUNCTION</scope>
    <scope>CATALYTIC ACTIVITY</scope>
    <scope>COFACTOR</scope>
    <scope>ACTIVITY REGULATION</scope>
    <scope>BIOPHYSICOCHEMICAL PROPERTIES</scope>
</reference>
<reference evidence="10" key="4">
    <citation type="journal article" date="2010" name="PLoS Pathog.">
        <title>Caenorhabditis elegans N-glycan core beta-galactoside confers sensitivity towards nematotoxic fungal galectin CGL2.</title>
        <authorList>
            <person name="Butschi A."/>
            <person name="Titz A."/>
            <person name="Waelti M.A."/>
            <person name="Olieric V."/>
            <person name="Paschinger K."/>
            <person name="Noebauer K."/>
            <person name="Guo X."/>
            <person name="Seeberger P.H."/>
            <person name="Wilson I.B."/>
            <person name="Aebi M."/>
            <person name="Hengartner M.O."/>
            <person name="Kuenzler M."/>
        </authorList>
    </citation>
    <scope>FUNCTION</scope>
</reference>
<gene>
    <name evidence="13" type="primary">fut-8</name>
    <name evidence="13" type="ORF">C10F3.6</name>
</gene>
<feature type="chain" id="PRO_0000438179" description="Alpha-(1,6)-fucosyltransferase">
    <location>
        <begin position="1"/>
        <end position="559"/>
    </location>
</feature>
<feature type="topological domain" description="Cytoplasmic" evidence="10">
    <location>
        <begin position="1"/>
        <end position="4"/>
    </location>
</feature>
<feature type="transmembrane region" description="Helical; Signal-anchor for type II membrane protein" evidence="2">
    <location>
        <begin position="5"/>
        <end position="24"/>
    </location>
</feature>
<feature type="topological domain" description="Lumenal" evidence="10">
    <location>
        <begin position="25"/>
        <end position="559"/>
    </location>
</feature>
<feature type="domain" description="GT23" evidence="6">
    <location>
        <begin position="190"/>
        <end position="480"/>
    </location>
</feature>
<feature type="domain" description="SH3" evidence="4">
    <location>
        <begin position="489"/>
        <end position="550"/>
    </location>
</feature>
<feature type="region of interest" description="Disordered" evidence="7">
    <location>
        <begin position="63"/>
        <end position="90"/>
    </location>
</feature>
<feature type="region of interest" description="Important for donor substrate binding" evidence="6">
    <location>
        <begin position="351"/>
        <end position="352"/>
    </location>
</feature>
<feature type="compositionally biased region" description="Basic and acidic residues" evidence="7">
    <location>
        <begin position="63"/>
        <end position="74"/>
    </location>
</feature>
<feature type="compositionally biased region" description="Pro residues" evidence="7">
    <location>
        <begin position="80"/>
        <end position="90"/>
    </location>
</feature>
<feature type="glycosylation site" description="N-linked (GlcNAc...) asparagine" evidence="5">
    <location>
        <position position="27"/>
    </location>
</feature>
<feature type="glycosylation site" description="N-linked (GlcNAc...) asparagine" evidence="5">
    <location>
        <position position="134"/>
    </location>
</feature>
<feature type="disulfide bond" evidence="1">
    <location>
        <begin position="188"/>
        <end position="251"/>
    </location>
</feature>
<feature type="disulfide bond" evidence="1">
    <location>
        <begin position="196"/>
        <end position="214"/>
    </location>
</feature>
<feature type="disulfide bond" evidence="1">
    <location>
        <begin position="202"/>
        <end position="206"/>
    </location>
</feature>
<feature type="disulfide bond" evidence="1">
    <location>
        <begin position="452"/>
        <end position="459"/>
    </location>
</feature>
<proteinExistence type="evidence at protein level"/>